<keyword id="KW-0046">Antibiotic resistance</keyword>
<keyword id="KW-0441">Lipid A biosynthesis</keyword>
<keyword id="KW-0444">Lipid biosynthesis</keyword>
<keyword id="KW-0443">Lipid metabolism</keyword>
<keyword id="KW-0448">Lipopolysaccharide biosynthesis</keyword>
<keyword id="KW-0511">Multifunctional enzyme</keyword>
<keyword id="KW-0520">NAD</keyword>
<keyword id="KW-0560">Oxidoreductase</keyword>
<keyword id="KW-0808">Transferase</keyword>
<name>ARNA_ECOSM</name>
<proteinExistence type="inferred from homology"/>
<accession>B1LLK9</accession>
<comment type="function">
    <text evidence="1">Bifunctional enzyme that catalyzes the oxidative decarboxylation of UDP-glucuronic acid (UDP-GlcUA) to UDP-4-keto-arabinose (UDP-Ara4O) and the addition of a formyl group to UDP-4-amino-4-deoxy-L-arabinose (UDP-L-Ara4N) to form UDP-L-4-formamido-arabinose (UDP-L-Ara4FN). The modified arabinose is attached to lipid A and is required for resistance to polymyxin and cationic antimicrobial peptides.</text>
</comment>
<comment type="catalytic activity">
    <reaction evidence="1">
        <text>UDP-alpha-D-glucuronate + NAD(+) = UDP-beta-L-threo-pentopyranos-4-ulose + CO2 + NADH</text>
        <dbReference type="Rhea" id="RHEA:24702"/>
        <dbReference type="ChEBI" id="CHEBI:16526"/>
        <dbReference type="ChEBI" id="CHEBI:57540"/>
        <dbReference type="ChEBI" id="CHEBI:57945"/>
        <dbReference type="ChEBI" id="CHEBI:58052"/>
        <dbReference type="ChEBI" id="CHEBI:58710"/>
        <dbReference type="EC" id="1.1.1.305"/>
    </reaction>
</comment>
<comment type="catalytic activity">
    <reaction evidence="1">
        <text>UDP-4-amino-4-deoxy-beta-L-arabinose + (6R)-10-formyltetrahydrofolate = UDP-4-deoxy-4-formamido-beta-L-arabinose + (6S)-5,6,7,8-tetrahydrofolate + H(+)</text>
        <dbReference type="Rhea" id="RHEA:24706"/>
        <dbReference type="ChEBI" id="CHEBI:15378"/>
        <dbReference type="ChEBI" id="CHEBI:57453"/>
        <dbReference type="ChEBI" id="CHEBI:58708"/>
        <dbReference type="ChEBI" id="CHEBI:58709"/>
        <dbReference type="ChEBI" id="CHEBI:195366"/>
        <dbReference type="EC" id="2.1.2.13"/>
    </reaction>
</comment>
<comment type="pathway">
    <text evidence="1">Nucleotide-sugar biosynthesis; UDP-4-deoxy-4-formamido-beta-L-arabinose biosynthesis; UDP-4-deoxy-4-formamido-beta-L-arabinose from UDP-alpha-D-glucuronate: step 1/3.</text>
</comment>
<comment type="pathway">
    <text evidence="1">Nucleotide-sugar biosynthesis; UDP-4-deoxy-4-formamido-beta-L-arabinose biosynthesis; UDP-4-deoxy-4-formamido-beta-L-arabinose from UDP-alpha-D-glucuronate: step 3/3.</text>
</comment>
<comment type="pathway">
    <text evidence="1">Bacterial outer membrane biogenesis; lipopolysaccharide biosynthesis.</text>
</comment>
<comment type="subunit">
    <text evidence="1">Homohexamer, formed by a dimer of trimers.</text>
</comment>
<comment type="similarity">
    <text evidence="1">In the N-terminal section; belongs to the Fmt family. UDP-L-Ara4N formyltransferase subfamily.</text>
</comment>
<comment type="similarity">
    <text evidence="1">In the C-terminal section; belongs to the NAD(P)-dependent epimerase/dehydratase family. UDP-glucuronic acid decarboxylase subfamily.</text>
</comment>
<organism>
    <name type="scientific">Escherichia coli (strain SMS-3-5 / SECEC)</name>
    <dbReference type="NCBI Taxonomy" id="439855"/>
    <lineage>
        <taxon>Bacteria</taxon>
        <taxon>Pseudomonadati</taxon>
        <taxon>Pseudomonadota</taxon>
        <taxon>Gammaproteobacteria</taxon>
        <taxon>Enterobacterales</taxon>
        <taxon>Enterobacteriaceae</taxon>
        <taxon>Escherichia</taxon>
    </lineage>
</organism>
<reference key="1">
    <citation type="journal article" date="2008" name="J. Bacteriol.">
        <title>Insights into the environmental resistance gene pool from the genome sequence of the multidrug-resistant environmental isolate Escherichia coli SMS-3-5.</title>
        <authorList>
            <person name="Fricke W.F."/>
            <person name="Wright M.S."/>
            <person name="Lindell A.H."/>
            <person name="Harkins D.M."/>
            <person name="Baker-Austin C."/>
            <person name="Ravel J."/>
            <person name="Stepanauskas R."/>
        </authorList>
    </citation>
    <scope>NUCLEOTIDE SEQUENCE [LARGE SCALE GENOMIC DNA]</scope>
    <source>
        <strain>SMS-3-5 / SECEC</strain>
    </source>
</reference>
<evidence type="ECO:0000255" key="1">
    <source>
        <dbReference type="HAMAP-Rule" id="MF_01166"/>
    </source>
</evidence>
<gene>
    <name evidence="1" type="primary">arnA</name>
    <name type="ordered locus">EcSMS35_2409</name>
</gene>
<dbReference type="EC" id="2.1.2.13" evidence="1"/>
<dbReference type="EC" id="1.1.1.305" evidence="1"/>
<dbReference type="EMBL" id="CP000970">
    <property type="protein sequence ID" value="ACB18744.1"/>
    <property type="molecule type" value="Genomic_DNA"/>
</dbReference>
<dbReference type="RefSeq" id="WP_000860265.1">
    <property type="nucleotide sequence ID" value="NC_010498.1"/>
</dbReference>
<dbReference type="SMR" id="B1LLK9"/>
<dbReference type="KEGG" id="ecm:EcSMS35_2409"/>
<dbReference type="HOGENOM" id="CLU_007383_23_2_6"/>
<dbReference type="UniPathway" id="UPA00030"/>
<dbReference type="UniPathway" id="UPA00032">
    <property type="reaction ID" value="UER00492"/>
</dbReference>
<dbReference type="UniPathway" id="UPA00032">
    <property type="reaction ID" value="UER00494"/>
</dbReference>
<dbReference type="Proteomes" id="UP000007011">
    <property type="component" value="Chromosome"/>
</dbReference>
<dbReference type="GO" id="GO:0016020">
    <property type="term" value="C:membrane"/>
    <property type="evidence" value="ECO:0007669"/>
    <property type="project" value="GOC"/>
</dbReference>
<dbReference type="GO" id="GO:0016831">
    <property type="term" value="F:carboxy-lyase activity"/>
    <property type="evidence" value="ECO:0007669"/>
    <property type="project" value="InterPro"/>
</dbReference>
<dbReference type="GO" id="GO:0099619">
    <property type="term" value="F:UDP-4-amino-4-deoxy-L-arabinose formyltransferase activity"/>
    <property type="evidence" value="ECO:0007669"/>
    <property type="project" value="UniProtKB-EC"/>
</dbReference>
<dbReference type="GO" id="GO:0099618">
    <property type="term" value="F:UDP-glucuronate dehydrogenase activity"/>
    <property type="evidence" value="ECO:0007669"/>
    <property type="project" value="UniProtKB-EC"/>
</dbReference>
<dbReference type="GO" id="GO:0009245">
    <property type="term" value="P:lipid A biosynthetic process"/>
    <property type="evidence" value="ECO:0007669"/>
    <property type="project" value="UniProtKB-KW"/>
</dbReference>
<dbReference type="GO" id="GO:0009103">
    <property type="term" value="P:lipopolysaccharide biosynthetic process"/>
    <property type="evidence" value="ECO:0007669"/>
    <property type="project" value="UniProtKB-UniRule"/>
</dbReference>
<dbReference type="GO" id="GO:0046677">
    <property type="term" value="P:response to antibiotic"/>
    <property type="evidence" value="ECO:0007669"/>
    <property type="project" value="UniProtKB-KW"/>
</dbReference>
<dbReference type="CDD" id="cd08702">
    <property type="entry name" value="Arna_FMT_C"/>
    <property type="match status" value="1"/>
</dbReference>
<dbReference type="CDD" id="cd05257">
    <property type="entry name" value="Arna_like_SDR_e"/>
    <property type="match status" value="1"/>
</dbReference>
<dbReference type="CDD" id="cd08644">
    <property type="entry name" value="FMT_core_ArnA_N"/>
    <property type="match status" value="1"/>
</dbReference>
<dbReference type="FunFam" id="3.40.50.720:FF:000197">
    <property type="entry name" value="Bifunctional polymyxin resistance protein ArnA"/>
    <property type="match status" value="1"/>
</dbReference>
<dbReference type="Gene3D" id="3.40.50.12230">
    <property type="match status" value="1"/>
</dbReference>
<dbReference type="Gene3D" id="3.40.50.720">
    <property type="entry name" value="NAD(P)-binding Rossmann-like Domain"/>
    <property type="match status" value="1"/>
</dbReference>
<dbReference type="HAMAP" id="MF_01166">
    <property type="entry name" value="ArnA"/>
    <property type="match status" value="1"/>
</dbReference>
<dbReference type="InterPro" id="IPR045869">
    <property type="entry name" value="Arna-like_SDR_e"/>
</dbReference>
<dbReference type="InterPro" id="IPR021168">
    <property type="entry name" value="Bifun_polymyxin_resist_ArnA"/>
</dbReference>
<dbReference type="InterPro" id="IPR001509">
    <property type="entry name" value="Epimerase_deHydtase"/>
</dbReference>
<dbReference type="InterPro" id="IPR005793">
    <property type="entry name" value="Formyl_trans_C"/>
</dbReference>
<dbReference type="InterPro" id="IPR002376">
    <property type="entry name" value="Formyl_transf_N"/>
</dbReference>
<dbReference type="InterPro" id="IPR036477">
    <property type="entry name" value="Formyl_transf_N_sf"/>
</dbReference>
<dbReference type="InterPro" id="IPR011034">
    <property type="entry name" value="Formyl_transferase-like_C_sf"/>
</dbReference>
<dbReference type="InterPro" id="IPR050177">
    <property type="entry name" value="Lipid_A_modif_metabolic_enz"/>
</dbReference>
<dbReference type="InterPro" id="IPR036291">
    <property type="entry name" value="NAD(P)-bd_dom_sf"/>
</dbReference>
<dbReference type="NCBIfam" id="NF005414">
    <property type="entry name" value="PRK06988.1"/>
    <property type="match status" value="1"/>
</dbReference>
<dbReference type="NCBIfam" id="NF005998">
    <property type="entry name" value="PRK08125.1"/>
    <property type="match status" value="1"/>
</dbReference>
<dbReference type="NCBIfam" id="NF008872">
    <property type="entry name" value="PRK11908.1"/>
    <property type="match status" value="1"/>
</dbReference>
<dbReference type="PANTHER" id="PTHR43245">
    <property type="entry name" value="BIFUNCTIONAL POLYMYXIN RESISTANCE PROTEIN ARNA"/>
    <property type="match status" value="1"/>
</dbReference>
<dbReference type="PANTHER" id="PTHR43245:SF13">
    <property type="entry name" value="UDP-D-APIOSE_UDP-D-XYLOSE SYNTHASE 2"/>
    <property type="match status" value="1"/>
</dbReference>
<dbReference type="Pfam" id="PF01370">
    <property type="entry name" value="Epimerase"/>
    <property type="match status" value="1"/>
</dbReference>
<dbReference type="Pfam" id="PF02911">
    <property type="entry name" value="Formyl_trans_C"/>
    <property type="match status" value="1"/>
</dbReference>
<dbReference type="Pfam" id="PF00551">
    <property type="entry name" value="Formyl_trans_N"/>
    <property type="match status" value="1"/>
</dbReference>
<dbReference type="PIRSF" id="PIRSF036506">
    <property type="entry name" value="Bifun_polymyxin_resist_ArnA"/>
    <property type="match status" value="1"/>
</dbReference>
<dbReference type="SUPFAM" id="SSF50486">
    <property type="entry name" value="FMT C-terminal domain-like"/>
    <property type="match status" value="1"/>
</dbReference>
<dbReference type="SUPFAM" id="SSF53328">
    <property type="entry name" value="Formyltransferase"/>
    <property type="match status" value="1"/>
</dbReference>
<dbReference type="SUPFAM" id="SSF51735">
    <property type="entry name" value="NAD(P)-binding Rossmann-fold domains"/>
    <property type="match status" value="1"/>
</dbReference>
<feature type="chain" id="PRO_1000137940" description="Bifunctional polymyxin resistance protein ArnA">
    <location>
        <begin position="1"/>
        <end position="660"/>
    </location>
</feature>
<feature type="region of interest" description="Formyltransferase ArnAFT">
    <location>
        <begin position="1"/>
        <end position="304"/>
    </location>
</feature>
<feature type="region of interest" description="Dehydrogenase ArnADH">
    <location>
        <begin position="314"/>
        <end position="660"/>
    </location>
</feature>
<feature type="active site" description="Proton donor; for formyltransferase activity" evidence="1">
    <location>
        <position position="104"/>
    </location>
</feature>
<feature type="active site" description="Proton acceptor; for decarboxylase activity" evidence="1">
    <location>
        <position position="434"/>
    </location>
</feature>
<feature type="active site" description="Proton donor; for decarboxylase activity" evidence="1">
    <location>
        <position position="619"/>
    </location>
</feature>
<feature type="binding site" evidence="1">
    <location>
        <begin position="86"/>
        <end position="88"/>
    </location>
    <ligand>
        <name>(6R)-10-formyltetrahydrofolate</name>
        <dbReference type="ChEBI" id="CHEBI:195366"/>
    </ligand>
</feature>
<feature type="binding site" evidence="1">
    <location>
        <position position="114"/>
    </location>
    <ligand>
        <name>(6R)-10-formyltetrahydrofolate</name>
        <dbReference type="ChEBI" id="CHEBI:195366"/>
    </ligand>
</feature>
<feature type="binding site" evidence="1">
    <location>
        <begin position="136"/>
        <end position="140"/>
    </location>
    <ligand>
        <name>(6R)-10-formyltetrahydrofolate</name>
        <dbReference type="ChEBI" id="CHEBI:195366"/>
    </ligand>
</feature>
<feature type="binding site" evidence="1">
    <location>
        <position position="347"/>
    </location>
    <ligand>
        <name>NAD(+)</name>
        <dbReference type="ChEBI" id="CHEBI:57540"/>
    </ligand>
</feature>
<feature type="binding site" evidence="1">
    <location>
        <begin position="368"/>
        <end position="369"/>
    </location>
    <ligand>
        <name>NAD(+)</name>
        <dbReference type="ChEBI" id="CHEBI:57540"/>
    </ligand>
</feature>
<feature type="binding site" evidence="1">
    <location>
        <position position="393"/>
    </location>
    <ligand>
        <name>UDP-alpha-D-glucuronate</name>
        <dbReference type="ChEBI" id="CHEBI:58052"/>
    </ligand>
</feature>
<feature type="binding site" evidence="1">
    <location>
        <position position="398"/>
    </location>
    <ligand>
        <name>UDP-alpha-D-glucuronate</name>
        <dbReference type="ChEBI" id="CHEBI:58052"/>
    </ligand>
</feature>
<feature type="binding site" evidence="1">
    <location>
        <begin position="432"/>
        <end position="433"/>
    </location>
    <ligand>
        <name>UDP-alpha-D-glucuronate</name>
        <dbReference type="ChEBI" id="CHEBI:58052"/>
    </ligand>
</feature>
<feature type="binding site" evidence="1">
    <location>
        <position position="460"/>
    </location>
    <ligand>
        <name>UDP-alpha-D-glucuronate</name>
        <dbReference type="ChEBI" id="CHEBI:58052"/>
    </ligand>
</feature>
<feature type="binding site" evidence="1">
    <location>
        <position position="492"/>
    </location>
    <ligand>
        <name>UDP-alpha-D-glucuronate</name>
        <dbReference type="ChEBI" id="CHEBI:58052"/>
    </ligand>
</feature>
<feature type="binding site" evidence="1">
    <location>
        <begin position="526"/>
        <end position="535"/>
    </location>
    <ligand>
        <name>UDP-alpha-D-glucuronate</name>
        <dbReference type="ChEBI" id="CHEBI:58052"/>
    </ligand>
</feature>
<feature type="binding site" evidence="1">
    <location>
        <position position="613"/>
    </location>
    <ligand>
        <name>UDP-alpha-D-glucuronate</name>
        <dbReference type="ChEBI" id="CHEBI:58052"/>
    </ligand>
</feature>
<feature type="site" description="Transition state stabilizer" evidence="1">
    <location>
        <position position="102"/>
    </location>
</feature>
<feature type="site" description="Raises pKa of active site His" evidence="1">
    <location>
        <position position="140"/>
    </location>
</feature>
<protein>
    <recommendedName>
        <fullName evidence="1">Bifunctional polymyxin resistance protein ArnA</fullName>
    </recommendedName>
    <domain>
        <recommendedName>
            <fullName evidence="1">UDP-4-amino-4-deoxy-L-arabinose formyltransferase</fullName>
            <ecNumber evidence="1">2.1.2.13</ecNumber>
        </recommendedName>
        <alternativeName>
            <fullName evidence="1">ArnAFT</fullName>
        </alternativeName>
        <alternativeName>
            <fullName evidence="1">UDP-L-Ara4N formyltransferase</fullName>
        </alternativeName>
    </domain>
    <domain>
        <recommendedName>
            <fullName evidence="1">UDP-glucuronic acid oxidase, UDP-4-keto-hexauronic acid decarboxylating</fullName>
            <ecNumber evidence="1">1.1.1.305</ecNumber>
        </recommendedName>
        <alternativeName>
            <fullName evidence="1">ArnADH</fullName>
        </alternativeName>
        <alternativeName>
            <fullName evidence="1">UDP-GlcUA decarboxylase</fullName>
        </alternativeName>
        <alternativeName>
            <fullName evidence="1">UDP-glucuronic acid dehydrogenase</fullName>
        </alternativeName>
    </domain>
</protein>
<sequence length="660" mass="74076">MKTVVFAYHDMGCLGIEALLAAGYEISAIFTHTDNPGEKAFYGSVARLAAERGIPVYAPDDVNHPLWVERIAQLSPDVIFSFYYRHLIHDKILQLAPAGAFNLHGSLLPKYRGRAPLNWVLVNGETETGVTLHRMVKRADAGAIVAQLRIAIAPDDIAITLHHKLCHAARQLLEQTLPAIKDGNILEIAQCENEATCFGRRTPEDSFLEWHKSAAVLHNMVRAVADPWPGAFSYVGNQKFTVWSSRVHSHAPAAQPGSVISVAPLLIACGDGALEIVTGQAGGGITMQGSQLAQTLGLVQGSRLNSQPACAARRRTRVLILGVNGFIGNHLTERLLREDHYEVYGLDIGSDAISRFLNHPHFHFVEGDISIHSEWIEYHVKKCDVVLPLVAIATPIEYTRNPLRVFELDFEENLRIIRYCVKYRKRIIFPSTSEVYGMCSDKYFDEDHSNLIVGPVNKPRWIYSVSKQLLDRVIWAYGEKEGLQFTLFRPFNWMGPRLDNLNAARIGSSRAITQLILNLVEGSPIKLIDGGKQKRCFTDIRDGIEALYRIIENAGNRCDGEIINIGNPENEASIEELGEMLLASFEKHPLRHYFPPFAGFRVVESSSYYGKGYQDVEHRKPSIRNARRCLDWEPKIDMQETIDETLDFFLRTVDLTDKPS</sequence>